<name>CF119_HUMAN</name>
<comment type="subcellular location">
    <subcellularLocation>
        <location evidence="1">Cell projection</location>
        <location evidence="1">Cilium</location>
        <location evidence="1">Flagellum</location>
    </subcellularLocation>
    <subcellularLocation>
        <location evidence="1">Cytoplasmic vesicle</location>
        <location evidence="1">Secretory vesicle</location>
        <location evidence="1">Acrosome</location>
    </subcellularLocation>
    <subcellularLocation>
        <location evidence="1">Cytoplasm</location>
    </subcellularLocation>
    <text evidence="1">In elongated spermatids, enriched in the principal piece of flagella where it is peri-axonemal. Disappears from sperm heads upon acrosome reaction.</text>
</comment>
<comment type="alternative products">
    <event type="alternative splicing"/>
    <isoform>
        <id>A1A4V9-1</id>
        <name>1</name>
        <sequence type="displayed"/>
    </isoform>
    <isoform>
        <id>A1A4V9-2</id>
        <name>2</name>
        <sequence type="described" ref="VSP_031808"/>
    </isoform>
    <isoform>
        <id>A1A4V9-3</id>
        <name>3</name>
        <sequence type="described" ref="VSP_031807"/>
    </isoform>
    <isoform>
        <id>A1A4V9-4</id>
        <name>4</name>
        <sequence type="described" ref="VSP_045828 VSP_045829"/>
    </isoform>
</comment>
<keyword id="KW-0025">Alternative splicing</keyword>
<keyword id="KW-0966">Cell projection</keyword>
<keyword id="KW-0969">Cilium</keyword>
<keyword id="KW-0175">Coiled coil</keyword>
<keyword id="KW-0963">Cytoplasm</keyword>
<keyword id="KW-0968">Cytoplasmic vesicle</keyword>
<keyword id="KW-0282">Flagellum</keyword>
<keyword id="KW-0597">Phosphoprotein</keyword>
<keyword id="KW-1267">Proteomics identification</keyword>
<keyword id="KW-1185">Reference proteome</keyword>
<dbReference type="EMBL" id="AC106886">
    <property type="status" value="NOT_ANNOTATED_CDS"/>
    <property type="molecule type" value="Genomic_DNA"/>
</dbReference>
<dbReference type="EMBL" id="CH471192">
    <property type="protein sequence ID" value="EAW52202.1"/>
    <property type="molecule type" value="Genomic_DNA"/>
</dbReference>
<dbReference type="EMBL" id="CH471192">
    <property type="protein sequence ID" value="EAW52206.1"/>
    <property type="molecule type" value="Genomic_DNA"/>
</dbReference>
<dbReference type="EMBL" id="BC073881">
    <property type="status" value="NOT_ANNOTATED_CDS"/>
    <property type="molecule type" value="mRNA"/>
</dbReference>
<dbReference type="EMBL" id="BC092491">
    <property type="protein sequence ID" value="AAH92491.1"/>
    <property type="molecule type" value="mRNA"/>
</dbReference>
<dbReference type="EMBL" id="BC128128">
    <property type="protein sequence ID" value="AAI28129.1"/>
    <property type="molecule type" value="mRNA"/>
</dbReference>
<dbReference type="EMBL" id="BC128129">
    <property type="protein sequence ID" value="AAI28130.1"/>
    <property type="molecule type" value="mRNA"/>
</dbReference>
<dbReference type="CCDS" id="CCDS32434.2">
    <molecule id="A1A4V9-1"/>
</dbReference>
<dbReference type="CCDS" id="CCDS55993.1">
    <molecule id="A1A4V9-4"/>
</dbReference>
<dbReference type="RefSeq" id="NP_001014979.2">
    <molecule id="A1A4V9-1"/>
    <property type="nucleotide sequence ID" value="NM_001014979.3"/>
</dbReference>
<dbReference type="RefSeq" id="NP_001182549.1">
    <molecule id="A1A4V9-4"/>
    <property type="nucleotide sequence ID" value="NM_001195620.2"/>
</dbReference>
<dbReference type="SMR" id="A1A4V9"/>
<dbReference type="BioGRID" id="124769">
    <property type="interactions" value="4"/>
</dbReference>
<dbReference type="FunCoup" id="A1A4V9">
    <property type="interactions" value="20"/>
</dbReference>
<dbReference type="IntAct" id="A1A4V9">
    <property type="interactions" value="2"/>
</dbReference>
<dbReference type="STRING" id="9606.ENSP00000437532"/>
<dbReference type="iPTMnet" id="A1A4V9"/>
<dbReference type="PhosphoSitePlus" id="A1A4V9"/>
<dbReference type="BioMuta" id="CCDC189"/>
<dbReference type="jPOST" id="A1A4V9"/>
<dbReference type="MassIVE" id="A1A4V9"/>
<dbReference type="PaxDb" id="9606-ENSP00000437532"/>
<dbReference type="PeptideAtlas" id="A1A4V9"/>
<dbReference type="ProteomicsDB" id="24281"/>
<dbReference type="ProteomicsDB" id="95">
    <molecule id="A1A4V9-1"/>
</dbReference>
<dbReference type="ProteomicsDB" id="96">
    <molecule id="A1A4V9-2"/>
</dbReference>
<dbReference type="ProteomicsDB" id="97">
    <molecule id="A1A4V9-3"/>
</dbReference>
<dbReference type="Antibodypedia" id="66032">
    <property type="antibodies" value="36 antibodies from 12 providers"/>
</dbReference>
<dbReference type="DNASU" id="90835"/>
<dbReference type="Ensembl" id="ENST00000543610.6">
    <molecule id="A1A4V9-1"/>
    <property type="protein sequence ID" value="ENSP00000437532.1"/>
    <property type="gene ID" value="ENSG00000196118.12"/>
</dbReference>
<dbReference type="Ensembl" id="ENST00000545825.1">
    <molecule id="A1A4V9-4"/>
    <property type="protein sequence ID" value="ENSP00000441164.1"/>
    <property type="gene ID" value="ENSG00000196118.12"/>
</dbReference>
<dbReference type="GeneID" id="90835"/>
<dbReference type="KEGG" id="hsa:90835"/>
<dbReference type="MANE-Select" id="ENST00000543610.6">
    <property type="protein sequence ID" value="ENSP00000437532.1"/>
    <property type="RefSeq nucleotide sequence ID" value="NM_001014979.3"/>
    <property type="RefSeq protein sequence ID" value="NP_001014979.2"/>
</dbReference>
<dbReference type="UCSC" id="uc002dzm.4">
    <molecule id="A1A4V9-1"/>
    <property type="organism name" value="human"/>
</dbReference>
<dbReference type="AGR" id="HGNC:28078"/>
<dbReference type="CTD" id="90835"/>
<dbReference type="DisGeNET" id="90835"/>
<dbReference type="GeneCards" id="CFAP119"/>
<dbReference type="HGNC" id="HGNC:28078">
    <property type="gene designation" value="CFAP119"/>
</dbReference>
<dbReference type="HPA" id="ENSG00000196118">
    <property type="expression patterns" value="Tissue enhanced (choroid)"/>
</dbReference>
<dbReference type="MIM" id="618318">
    <property type="type" value="gene"/>
</dbReference>
<dbReference type="neXtProt" id="NX_A1A4V9"/>
<dbReference type="OpenTargets" id="ENSG00000196118"/>
<dbReference type="VEuPathDB" id="HostDB:ENSG00000196118"/>
<dbReference type="eggNOG" id="ENOG502RXPT">
    <property type="taxonomic scope" value="Eukaryota"/>
</dbReference>
<dbReference type="GeneTree" id="ENSGT00940000154323"/>
<dbReference type="HOGENOM" id="CLU_1517426_0_0_1"/>
<dbReference type="InParanoid" id="A1A4V9"/>
<dbReference type="OMA" id="QTYIKTQ"/>
<dbReference type="OrthoDB" id="425082at2759"/>
<dbReference type="PAN-GO" id="A1A4V9">
    <property type="GO annotations" value="0 GO annotations based on evolutionary models"/>
</dbReference>
<dbReference type="PhylomeDB" id="A1A4V9"/>
<dbReference type="TreeFam" id="TF343725"/>
<dbReference type="PathwayCommons" id="A1A4V9"/>
<dbReference type="SignaLink" id="A1A4V9"/>
<dbReference type="BioGRID-ORCS" id="90835">
    <property type="hits" value="12 hits in 1113 CRISPR screens"/>
</dbReference>
<dbReference type="ChiTaRS" id="CCDC189">
    <property type="organism name" value="human"/>
</dbReference>
<dbReference type="GenomeRNAi" id="90835"/>
<dbReference type="Pharos" id="A1A4V9">
    <property type="development level" value="Tdark"/>
</dbReference>
<dbReference type="PRO" id="PR:A1A4V9"/>
<dbReference type="Proteomes" id="UP000005640">
    <property type="component" value="Chromosome 16"/>
</dbReference>
<dbReference type="RNAct" id="A1A4V9">
    <property type="molecule type" value="protein"/>
</dbReference>
<dbReference type="Bgee" id="ENSG00000196118">
    <property type="expression patterns" value="Expressed in right uterine tube and 128 other cell types or tissues"/>
</dbReference>
<dbReference type="ExpressionAtlas" id="A1A4V9">
    <property type="expression patterns" value="baseline and differential"/>
</dbReference>
<dbReference type="GO" id="GO:0001669">
    <property type="term" value="C:acrosomal vesicle"/>
    <property type="evidence" value="ECO:0000250"/>
    <property type="project" value="UniProtKB"/>
</dbReference>
<dbReference type="GO" id="GO:0005737">
    <property type="term" value="C:cytoplasm"/>
    <property type="evidence" value="ECO:0000250"/>
    <property type="project" value="UniProtKB"/>
</dbReference>
<dbReference type="GO" id="GO:0001534">
    <property type="term" value="C:radial spoke"/>
    <property type="evidence" value="ECO:0007669"/>
    <property type="project" value="Ensembl"/>
</dbReference>
<dbReference type="GO" id="GO:0097228">
    <property type="term" value="C:sperm principal piece"/>
    <property type="evidence" value="ECO:0000250"/>
    <property type="project" value="UniProtKB"/>
</dbReference>
<dbReference type="GO" id="GO:0010467">
    <property type="term" value="P:gene expression"/>
    <property type="evidence" value="ECO:0007669"/>
    <property type="project" value="Ensembl"/>
</dbReference>
<dbReference type="GO" id="GO:0007338">
    <property type="term" value="P:single fertilization"/>
    <property type="evidence" value="ECO:0007669"/>
    <property type="project" value="Ensembl"/>
</dbReference>
<dbReference type="GO" id="GO:0120316">
    <property type="term" value="P:sperm flagellum assembly"/>
    <property type="evidence" value="ECO:0007669"/>
    <property type="project" value="Ensembl"/>
</dbReference>
<dbReference type="InterPro" id="IPR032727">
    <property type="entry name" value="CLAMP"/>
</dbReference>
<dbReference type="PANTHER" id="PTHR28457:SF1">
    <property type="entry name" value="CILIA- AND FLAGELLA-ASSOCIATED PROTEIN 119"/>
    <property type="match status" value="1"/>
</dbReference>
<dbReference type="PANTHER" id="PTHR28457">
    <property type="entry name" value="COILED-COIL DOMAIN-CONTAINING PROTEIN 189"/>
    <property type="match status" value="1"/>
</dbReference>
<dbReference type="Pfam" id="PF14769">
    <property type="entry name" value="CLAMP"/>
    <property type="match status" value="1"/>
</dbReference>
<sequence length="331" mass="37921">MLNRKTSHFLGMRVQSELEHLSELRREAGKDRSSVHGSAARTRASVRTQWTTAAAAKADEDPGANLFPPPLPRPRICMWKYLDVHSMHQLEKTTNAEMREVLAELLELGCPEQSLRDAITLDLFCHALIFCRQQGFSLEQTSAACALLQDLHKACIATPLGNVEECYRYFTSVLFCHGVRRPPFSIDLFKEEQLLALEDYVVNTYFRHFKLYKYVFTPQVRLDLSLTYMGLQPPKLWPESETEKEESKEMEEQAVTPQKEELETVAPPEPEPSHIHVLRAYIKTQVNKELEQLQGLVEERLKASEERLSSKLTALERPFQLPPGKGKSKTK</sequence>
<protein>
    <recommendedName>
        <fullName evidence="6">Cilia- and flagella-associated protein 119</fullName>
    </recommendedName>
    <alternativeName>
        <fullName evidence="7">Coiled-coil domain-containing protein 189</fullName>
    </alternativeName>
</protein>
<organism>
    <name type="scientific">Homo sapiens</name>
    <name type="common">Human</name>
    <dbReference type="NCBI Taxonomy" id="9606"/>
    <lineage>
        <taxon>Eukaryota</taxon>
        <taxon>Metazoa</taxon>
        <taxon>Chordata</taxon>
        <taxon>Craniata</taxon>
        <taxon>Vertebrata</taxon>
        <taxon>Euteleostomi</taxon>
        <taxon>Mammalia</taxon>
        <taxon>Eutheria</taxon>
        <taxon>Euarchontoglires</taxon>
        <taxon>Primates</taxon>
        <taxon>Haplorrhini</taxon>
        <taxon>Catarrhini</taxon>
        <taxon>Hominidae</taxon>
        <taxon>Homo</taxon>
    </lineage>
</organism>
<proteinExistence type="evidence at protein level"/>
<gene>
    <name evidence="7" type="primary">CFAP119</name>
    <name evidence="7" type="synonym">C16orf93</name>
    <name evidence="7" type="synonym">CCDC189</name>
</gene>
<accession>A1A4V9</accession>
<accession>A1A4V8</accession>
<accession>F5GX13</accession>
<accession>Q569G2</accession>
<reference key="1">
    <citation type="journal article" date="2004" name="Nature">
        <title>The sequence and analysis of duplication-rich human chromosome 16.</title>
        <authorList>
            <person name="Martin J."/>
            <person name="Han C."/>
            <person name="Gordon L.A."/>
            <person name="Terry A."/>
            <person name="Prabhakar S."/>
            <person name="She X."/>
            <person name="Xie G."/>
            <person name="Hellsten U."/>
            <person name="Chan Y.M."/>
            <person name="Altherr M."/>
            <person name="Couronne O."/>
            <person name="Aerts A."/>
            <person name="Bajorek E."/>
            <person name="Black S."/>
            <person name="Blumer H."/>
            <person name="Branscomb E."/>
            <person name="Brown N.C."/>
            <person name="Bruno W.J."/>
            <person name="Buckingham J.M."/>
            <person name="Callen D.F."/>
            <person name="Campbell C.S."/>
            <person name="Campbell M.L."/>
            <person name="Campbell E.W."/>
            <person name="Caoile C."/>
            <person name="Challacombe J.F."/>
            <person name="Chasteen L.A."/>
            <person name="Chertkov O."/>
            <person name="Chi H.C."/>
            <person name="Christensen M."/>
            <person name="Clark L.M."/>
            <person name="Cohn J.D."/>
            <person name="Denys M."/>
            <person name="Detter J.C."/>
            <person name="Dickson M."/>
            <person name="Dimitrijevic-Bussod M."/>
            <person name="Escobar J."/>
            <person name="Fawcett J.J."/>
            <person name="Flowers D."/>
            <person name="Fotopulos D."/>
            <person name="Glavina T."/>
            <person name="Gomez M."/>
            <person name="Gonzales E."/>
            <person name="Goodstein D."/>
            <person name="Goodwin L.A."/>
            <person name="Grady D.L."/>
            <person name="Grigoriev I."/>
            <person name="Groza M."/>
            <person name="Hammon N."/>
            <person name="Hawkins T."/>
            <person name="Haydu L."/>
            <person name="Hildebrand C.E."/>
            <person name="Huang W."/>
            <person name="Israni S."/>
            <person name="Jett J."/>
            <person name="Jewett P.B."/>
            <person name="Kadner K."/>
            <person name="Kimball H."/>
            <person name="Kobayashi A."/>
            <person name="Krawczyk M.-C."/>
            <person name="Leyba T."/>
            <person name="Longmire J.L."/>
            <person name="Lopez F."/>
            <person name="Lou Y."/>
            <person name="Lowry S."/>
            <person name="Ludeman T."/>
            <person name="Manohar C.F."/>
            <person name="Mark G.A."/>
            <person name="McMurray K.L."/>
            <person name="Meincke L.J."/>
            <person name="Morgan J."/>
            <person name="Moyzis R.K."/>
            <person name="Mundt M.O."/>
            <person name="Munk A.C."/>
            <person name="Nandkeshwar R.D."/>
            <person name="Pitluck S."/>
            <person name="Pollard M."/>
            <person name="Predki P."/>
            <person name="Parson-Quintana B."/>
            <person name="Ramirez L."/>
            <person name="Rash S."/>
            <person name="Retterer J."/>
            <person name="Ricke D.O."/>
            <person name="Robinson D.L."/>
            <person name="Rodriguez A."/>
            <person name="Salamov A."/>
            <person name="Saunders E.H."/>
            <person name="Scott D."/>
            <person name="Shough T."/>
            <person name="Stallings R.L."/>
            <person name="Stalvey M."/>
            <person name="Sutherland R.D."/>
            <person name="Tapia R."/>
            <person name="Tesmer J.G."/>
            <person name="Thayer N."/>
            <person name="Thompson L.S."/>
            <person name="Tice H."/>
            <person name="Torney D.C."/>
            <person name="Tran-Gyamfi M."/>
            <person name="Tsai M."/>
            <person name="Ulanovsky L.E."/>
            <person name="Ustaszewska A."/>
            <person name="Vo N."/>
            <person name="White P.S."/>
            <person name="Williams A.L."/>
            <person name="Wills P.L."/>
            <person name="Wu J.-R."/>
            <person name="Wu K."/>
            <person name="Yang J."/>
            <person name="DeJong P."/>
            <person name="Bruce D."/>
            <person name="Doggett N.A."/>
            <person name="Deaven L."/>
            <person name="Schmutz J."/>
            <person name="Grimwood J."/>
            <person name="Richardson P."/>
            <person name="Rokhsar D.S."/>
            <person name="Eichler E.E."/>
            <person name="Gilna P."/>
            <person name="Lucas S.M."/>
            <person name="Myers R.M."/>
            <person name="Rubin E.M."/>
            <person name="Pennacchio L.A."/>
        </authorList>
    </citation>
    <scope>NUCLEOTIDE SEQUENCE [LARGE SCALE GENOMIC DNA]</scope>
</reference>
<reference key="2">
    <citation type="submission" date="2005-07" db="EMBL/GenBank/DDBJ databases">
        <authorList>
            <person name="Mural R.J."/>
            <person name="Istrail S."/>
            <person name="Sutton G.G."/>
            <person name="Florea L."/>
            <person name="Halpern A.L."/>
            <person name="Mobarry C.M."/>
            <person name="Lippert R."/>
            <person name="Walenz B."/>
            <person name="Shatkay H."/>
            <person name="Dew I."/>
            <person name="Miller J.R."/>
            <person name="Flanigan M.J."/>
            <person name="Edwards N.J."/>
            <person name="Bolanos R."/>
            <person name="Fasulo D."/>
            <person name="Halldorsson B.V."/>
            <person name="Hannenhalli S."/>
            <person name="Turner R."/>
            <person name="Yooseph S."/>
            <person name="Lu F."/>
            <person name="Nusskern D.R."/>
            <person name="Shue B.C."/>
            <person name="Zheng X.H."/>
            <person name="Zhong F."/>
            <person name="Delcher A.L."/>
            <person name="Huson D.H."/>
            <person name="Kravitz S.A."/>
            <person name="Mouchard L."/>
            <person name="Reinert K."/>
            <person name="Remington K.A."/>
            <person name="Clark A.G."/>
            <person name="Waterman M.S."/>
            <person name="Eichler E.E."/>
            <person name="Adams M.D."/>
            <person name="Hunkapiller M.W."/>
            <person name="Myers E.W."/>
            <person name="Venter J.C."/>
        </authorList>
    </citation>
    <scope>NUCLEOTIDE SEQUENCE [LARGE SCALE GENOMIC DNA]</scope>
</reference>
<reference key="3">
    <citation type="journal article" date="2004" name="Genome Res.">
        <title>The status, quality, and expansion of the NIH full-length cDNA project: the Mammalian Gene Collection (MGC).</title>
        <authorList>
            <consortium name="The MGC Project Team"/>
        </authorList>
    </citation>
    <scope>NUCLEOTIDE SEQUENCE [LARGE SCALE MRNA] (ISOFORMS 1; 2; 3 AND 4)</scope>
    <source>
        <tissue>Testis</tissue>
    </source>
</reference>
<feature type="chain" id="PRO_0000321842" description="Cilia- and flagella-associated protein 119">
    <location>
        <begin position="1"/>
        <end position="331"/>
    </location>
</feature>
<feature type="region of interest" description="Disordered" evidence="4">
    <location>
        <begin position="236"/>
        <end position="271"/>
    </location>
</feature>
<feature type="region of interest" description="Disordered" evidence="4">
    <location>
        <begin position="309"/>
        <end position="331"/>
    </location>
</feature>
<feature type="coiled-coil region" evidence="3">
    <location>
        <begin position="286"/>
        <end position="317"/>
    </location>
</feature>
<feature type="modified residue" description="Phosphoserine" evidence="2">
    <location>
        <position position="34"/>
    </location>
</feature>
<feature type="splice variant" id="VSP_031807" description="In isoform 3." evidence="5">
    <location>
        <begin position="1"/>
        <end position="228"/>
    </location>
</feature>
<feature type="splice variant" id="VSP_031808" description="In isoform 2." evidence="5">
    <original>MLNRKTSHFLGMRVQSELEHLSELRREAGKDRSSVHGSAARTRASVRTQWTTAAAAKADEDPGANLFP</original>
    <variation>MASYSGFSGLLEIRYGPGHRSCLPQFAFFPQ</variation>
    <location>
        <begin position="1"/>
        <end position="68"/>
    </location>
</feature>
<feature type="splice variant" id="VSP_045828" description="In isoform 4." evidence="5">
    <original>ATPLGNVEECYRYFTSVLFC</original>
    <variation>GERGQLPGLSPREKRNRAWH</variation>
    <location>
        <begin position="157"/>
        <end position="176"/>
    </location>
</feature>
<feature type="splice variant" id="VSP_045829" description="In isoform 4." evidence="5">
    <location>
        <begin position="177"/>
        <end position="330"/>
    </location>
</feature>
<feature type="sequence conflict" description="In Ref. 3; AAH92491." evidence="6" ref="3">
    <original>K</original>
    <variation>E</variation>
    <location>
        <position position="244"/>
    </location>
</feature>
<evidence type="ECO:0000250" key="1">
    <source>
        <dbReference type="UniProtKB" id="B0BMZ6"/>
    </source>
</evidence>
<evidence type="ECO:0000250" key="2">
    <source>
        <dbReference type="UniProtKB" id="Q6NZQ0"/>
    </source>
</evidence>
<evidence type="ECO:0000255" key="3"/>
<evidence type="ECO:0000256" key="4">
    <source>
        <dbReference type="SAM" id="MobiDB-lite"/>
    </source>
</evidence>
<evidence type="ECO:0000303" key="5">
    <source>
    </source>
</evidence>
<evidence type="ECO:0000305" key="6"/>
<evidence type="ECO:0000312" key="7">
    <source>
        <dbReference type="HGNC" id="HGNC:28078"/>
    </source>
</evidence>